<comment type="function">
    <text evidence="1">Catalyzes the NAD(+)-dependent oxidation of L-threonine to 2-amino-3-ketobutyrate.</text>
</comment>
<comment type="catalytic activity">
    <reaction evidence="1">
        <text>L-threonine + NAD(+) = (2S)-2-amino-3-oxobutanoate + NADH + H(+)</text>
        <dbReference type="Rhea" id="RHEA:13161"/>
        <dbReference type="ChEBI" id="CHEBI:15378"/>
        <dbReference type="ChEBI" id="CHEBI:57540"/>
        <dbReference type="ChEBI" id="CHEBI:57926"/>
        <dbReference type="ChEBI" id="CHEBI:57945"/>
        <dbReference type="ChEBI" id="CHEBI:78948"/>
        <dbReference type="EC" id="1.1.1.103"/>
    </reaction>
</comment>
<comment type="cofactor">
    <cofactor evidence="1">
        <name>Zn(2+)</name>
        <dbReference type="ChEBI" id="CHEBI:29105"/>
    </cofactor>
    <text evidence="1">Binds 2 Zn(2+) ions per subunit.</text>
</comment>
<comment type="pathway">
    <text evidence="1">Amino-acid degradation; L-threonine degradation via oxydo-reductase pathway; glycine from L-threonine: step 1/2.</text>
</comment>
<comment type="subunit">
    <text evidence="1">Homotetramer.</text>
</comment>
<comment type="subcellular location">
    <subcellularLocation>
        <location evidence="1">Cytoplasm</location>
    </subcellularLocation>
</comment>
<comment type="similarity">
    <text evidence="1">Belongs to the zinc-containing alcohol dehydrogenase family.</text>
</comment>
<accession>Q0HPI5</accession>
<dbReference type="EC" id="1.1.1.103" evidence="1"/>
<dbReference type="EMBL" id="CP000444">
    <property type="protein sequence ID" value="ABI44970.1"/>
    <property type="molecule type" value="Genomic_DNA"/>
</dbReference>
<dbReference type="SMR" id="Q0HPI5"/>
<dbReference type="KEGG" id="shm:Shewmr7_3993"/>
<dbReference type="HOGENOM" id="CLU_026673_11_0_6"/>
<dbReference type="UniPathway" id="UPA00046">
    <property type="reaction ID" value="UER00505"/>
</dbReference>
<dbReference type="GO" id="GO:0005737">
    <property type="term" value="C:cytoplasm"/>
    <property type="evidence" value="ECO:0007669"/>
    <property type="project" value="UniProtKB-SubCell"/>
</dbReference>
<dbReference type="GO" id="GO:0008743">
    <property type="term" value="F:L-threonine 3-dehydrogenase activity"/>
    <property type="evidence" value="ECO:0007669"/>
    <property type="project" value="UniProtKB-UniRule"/>
</dbReference>
<dbReference type="GO" id="GO:0008270">
    <property type="term" value="F:zinc ion binding"/>
    <property type="evidence" value="ECO:0007669"/>
    <property type="project" value="UniProtKB-UniRule"/>
</dbReference>
<dbReference type="GO" id="GO:0019518">
    <property type="term" value="P:L-threonine catabolic process to glycine"/>
    <property type="evidence" value="ECO:0007669"/>
    <property type="project" value="UniProtKB-UniPathway"/>
</dbReference>
<dbReference type="Gene3D" id="3.90.180.10">
    <property type="entry name" value="Medium-chain alcohol dehydrogenases, catalytic domain"/>
    <property type="match status" value="1"/>
</dbReference>
<dbReference type="Gene3D" id="3.40.50.720">
    <property type="entry name" value="NAD(P)-binding Rossmann-like Domain"/>
    <property type="match status" value="1"/>
</dbReference>
<dbReference type="HAMAP" id="MF_00627">
    <property type="entry name" value="Thr_dehydrog"/>
    <property type="match status" value="1"/>
</dbReference>
<dbReference type="InterPro" id="IPR013149">
    <property type="entry name" value="ADH-like_C"/>
</dbReference>
<dbReference type="InterPro" id="IPR013154">
    <property type="entry name" value="ADH-like_N"/>
</dbReference>
<dbReference type="InterPro" id="IPR002328">
    <property type="entry name" value="ADH_Zn_CS"/>
</dbReference>
<dbReference type="InterPro" id="IPR011032">
    <property type="entry name" value="GroES-like_sf"/>
</dbReference>
<dbReference type="InterPro" id="IPR004627">
    <property type="entry name" value="L-Threonine_3-DHase"/>
</dbReference>
<dbReference type="InterPro" id="IPR036291">
    <property type="entry name" value="NAD(P)-bd_dom_sf"/>
</dbReference>
<dbReference type="InterPro" id="IPR020843">
    <property type="entry name" value="PKS_ER"/>
</dbReference>
<dbReference type="InterPro" id="IPR050129">
    <property type="entry name" value="Zn_alcohol_dh"/>
</dbReference>
<dbReference type="NCBIfam" id="NF003808">
    <property type="entry name" value="PRK05396.1"/>
    <property type="match status" value="1"/>
</dbReference>
<dbReference type="NCBIfam" id="TIGR00692">
    <property type="entry name" value="tdh"/>
    <property type="match status" value="1"/>
</dbReference>
<dbReference type="PANTHER" id="PTHR43401">
    <property type="entry name" value="L-THREONINE 3-DEHYDROGENASE"/>
    <property type="match status" value="1"/>
</dbReference>
<dbReference type="PANTHER" id="PTHR43401:SF2">
    <property type="entry name" value="L-THREONINE 3-DEHYDROGENASE"/>
    <property type="match status" value="1"/>
</dbReference>
<dbReference type="Pfam" id="PF08240">
    <property type="entry name" value="ADH_N"/>
    <property type="match status" value="1"/>
</dbReference>
<dbReference type="Pfam" id="PF00107">
    <property type="entry name" value="ADH_zinc_N"/>
    <property type="match status" value="1"/>
</dbReference>
<dbReference type="SMART" id="SM00829">
    <property type="entry name" value="PKS_ER"/>
    <property type="match status" value="1"/>
</dbReference>
<dbReference type="SUPFAM" id="SSF50129">
    <property type="entry name" value="GroES-like"/>
    <property type="match status" value="1"/>
</dbReference>
<dbReference type="SUPFAM" id="SSF51735">
    <property type="entry name" value="NAD(P)-binding Rossmann-fold domains"/>
    <property type="match status" value="1"/>
</dbReference>
<dbReference type="PROSITE" id="PS00059">
    <property type="entry name" value="ADH_ZINC"/>
    <property type="match status" value="1"/>
</dbReference>
<organism>
    <name type="scientific">Shewanella sp. (strain MR-7)</name>
    <dbReference type="NCBI Taxonomy" id="60481"/>
    <lineage>
        <taxon>Bacteria</taxon>
        <taxon>Pseudomonadati</taxon>
        <taxon>Pseudomonadota</taxon>
        <taxon>Gammaproteobacteria</taxon>
        <taxon>Alteromonadales</taxon>
        <taxon>Shewanellaceae</taxon>
        <taxon>Shewanella</taxon>
    </lineage>
</organism>
<gene>
    <name evidence="1" type="primary">tdh</name>
    <name type="ordered locus">Shewmr7_3993</name>
</gene>
<name>TDH_SHESR</name>
<proteinExistence type="inferred from homology"/>
<protein>
    <recommendedName>
        <fullName evidence="1">L-threonine 3-dehydrogenase</fullName>
        <shortName evidence="1">TDH</shortName>
        <ecNumber evidence="1">1.1.1.103</ecNumber>
    </recommendedName>
</protein>
<reference key="1">
    <citation type="submission" date="2006-08" db="EMBL/GenBank/DDBJ databases">
        <title>Complete sequence of chromosome 1 of Shewanella sp. MR-7.</title>
        <authorList>
            <person name="Copeland A."/>
            <person name="Lucas S."/>
            <person name="Lapidus A."/>
            <person name="Barry K."/>
            <person name="Detter J.C."/>
            <person name="Glavina del Rio T."/>
            <person name="Hammon N."/>
            <person name="Israni S."/>
            <person name="Dalin E."/>
            <person name="Tice H."/>
            <person name="Pitluck S."/>
            <person name="Kiss H."/>
            <person name="Brettin T."/>
            <person name="Bruce D."/>
            <person name="Han C."/>
            <person name="Tapia R."/>
            <person name="Gilna P."/>
            <person name="Schmutz J."/>
            <person name="Larimer F."/>
            <person name="Land M."/>
            <person name="Hauser L."/>
            <person name="Kyrpides N."/>
            <person name="Mikhailova N."/>
            <person name="Nealson K."/>
            <person name="Konstantinidis K."/>
            <person name="Klappenbach J."/>
            <person name="Tiedje J."/>
            <person name="Richardson P."/>
        </authorList>
    </citation>
    <scope>NUCLEOTIDE SEQUENCE [LARGE SCALE GENOMIC DNA]</scope>
    <source>
        <strain>MR-7</strain>
    </source>
</reference>
<feature type="chain" id="PRO_1000051659" description="L-threonine 3-dehydrogenase">
    <location>
        <begin position="1"/>
        <end position="341"/>
    </location>
</feature>
<feature type="active site" description="Charge relay system" evidence="1">
    <location>
        <position position="40"/>
    </location>
</feature>
<feature type="active site" description="Charge relay system" evidence="1">
    <location>
        <position position="43"/>
    </location>
</feature>
<feature type="binding site" evidence="1">
    <location>
        <position position="38"/>
    </location>
    <ligand>
        <name>Zn(2+)</name>
        <dbReference type="ChEBI" id="CHEBI:29105"/>
        <label>1</label>
        <note>catalytic</note>
    </ligand>
</feature>
<feature type="binding site" evidence="1">
    <location>
        <position position="63"/>
    </location>
    <ligand>
        <name>Zn(2+)</name>
        <dbReference type="ChEBI" id="CHEBI:29105"/>
        <label>1</label>
        <note>catalytic</note>
    </ligand>
</feature>
<feature type="binding site" evidence="1">
    <location>
        <position position="64"/>
    </location>
    <ligand>
        <name>Zn(2+)</name>
        <dbReference type="ChEBI" id="CHEBI:29105"/>
        <label>1</label>
        <note>catalytic</note>
    </ligand>
</feature>
<feature type="binding site" evidence="1">
    <location>
        <position position="93"/>
    </location>
    <ligand>
        <name>Zn(2+)</name>
        <dbReference type="ChEBI" id="CHEBI:29105"/>
        <label>2</label>
    </ligand>
</feature>
<feature type="binding site" evidence="1">
    <location>
        <position position="96"/>
    </location>
    <ligand>
        <name>Zn(2+)</name>
        <dbReference type="ChEBI" id="CHEBI:29105"/>
        <label>2</label>
    </ligand>
</feature>
<feature type="binding site" evidence="1">
    <location>
        <position position="99"/>
    </location>
    <ligand>
        <name>Zn(2+)</name>
        <dbReference type="ChEBI" id="CHEBI:29105"/>
        <label>2</label>
    </ligand>
</feature>
<feature type="binding site" evidence="1">
    <location>
        <position position="107"/>
    </location>
    <ligand>
        <name>Zn(2+)</name>
        <dbReference type="ChEBI" id="CHEBI:29105"/>
        <label>2</label>
    </ligand>
</feature>
<feature type="binding site" evidence="1">
    <location>
        <position position="175"/>
    </location>
    <ligand>
        <name>NAD(+)</name>
        <dbReference type="ChEBI" id="CHEBI:57540"/>
    </ligand>
</feature>
<feature type="binding site" evidence="1">
    <location>
        <position position="195"/>
    </location>
    <ligand>
        <name>NAD(+)</name>
        <dbReference type="ChEBI" id="CHEBI:57540"/>
    </ligand>
</feature>
<feature type="binding site" evidence="1">
    <location>
        <position position="200"/>
    </location>
    <ligand>
        <name>NAD(+)</name>
        <dbReference type="ChEBI" id="CHEBI:57540"/>
    </ligand>
</feature>
<feature type="binding site" evidence="1">
    <location>
        <begin position="262"/>
        <end position="264"/>
    </location>
    <ligand>
        <name>NAD(+)</name>
        <dbReference type="ChEBI" id="CHEBI:57540"/>
    </ligand>
</feature>
<feature type="binding site" evidence="1">
    <location>
        <begin position="286"/>
        <end position="287"/>
    </location>
    <ligand>
        <name>NAD(+)</name>
        <dbReference type="ChEBI" id="CHEBI:57540"/>
    </ligand>
</feature>
<feature type="site" description="Important for catalytic activity for the proton relay mechanism but does not participate directly in the coordination of zinc atom" evidence="1">
    <location>
        <position position="148"/>
    </location>
</feature>
<sequence length="341" mass="37250">MKALSKLKAEKGIWLVDAPKPEMGHNDLLIKIKKTAICGTDMHIYNWDEWSQKTIPVPMVVGHEYVGEVVDIGQEVRGFKIGDRVSGEGHITCGHCRNCRAGRTHLCRNTSGVGVNREGSFAEYLVIPAFNAFKIPDDISDDLASIFDPFGNAVHTALSFDLVGEDVLITGAGPIGIMAAAVCRHVGARHVVITDVNEYRLELARKMGATRAVNVAQENLKDVMKELGMTEGFDVGLEMSGVPSAFHAMLDTMNHGGKIAMLGIPGGEMAIDWSKVIFKGLVIKGIYGREMFETWYKMASLIQSGLDISPIITHHYKIDDFQKGFDAMGSGQSGKVILSWD</sequence>
<evidence type="ECO:0000255" key="1">
    <source>
        <dbReference type="HAMAP-Rule" id="MF_00627"/>
    </source>
</evidence>
<keyword id="KW-0963">Cytoplasm</keyword>
<keyword id="KW-0479">Metal-binding</keyword>
<keyword id="KW-0520">NAD</keyword>
<keyword id="KW-0560">Oxidoreductase</keyword>
<keyword id="KW-0862">Zinc</keyword>